<organism>
    <name type="scientific">Salmonella gallinarum (strain 287/91 / NCTC 13346)</name>
    <dbReference type="NCBI Taxonomy" id="550538"/>
    <lineage>
        <taxon>Bacteria</taxon>
        <taxon>Pseudomonadati</taxon>
        <taxon>Pseudomonadota</taxon>
        <taxon>Gammaproteobacteria</taxon>
        <taxon>Enterobacterales</taxon>
        <taxon>Enterobacteriaceae</taxon>
        <taxon>Salmonella</taxon>
    </lineage>
</organism>
<proteinExistence type="inferred from homology"/>
<feature type="chain" id="PRO_1000186929" description="Allantoinase">
    <location>
        <begin position="1"/>
        <end position="453"/>
    </location>
</feature>
<feature type="binding site" evidence="1">
    <location>
        <position position="59"/>
    </location>
    <ligand>
        <name>Zn(2+)</name>
        <dbReference type="ChEBI" id="CHEBI:29105"/>
        <label>1</label>
    </ligand>
</feature>
<feature type="binding site" evidence="1">
    <location>
        <position position="61"/>
    </location>
    <ligand>
        <name>Zn(2+)</name>
        <dbReference type="ChEBI" id="CHEBI:29105"/>
        <label>1</label>
    </ligand>
</feature>
<feature type="binding site" description="via carbamate group" evidence="1">
    <location>
        <position position="146"/>
    </location>
    <ligand>
        <name>Zn(2+)</name>
        <dbReference type="ChEBI" id="CHEBI:29105"/>
        <label>1</label>
    </ligand>
</feature>
<feature type="binding site" description="via carbamate group" evidence="1">
    <location>
        <position position="146"/>
    </location>
    <ligand>
        <name>Zn(2+)</name>
        <dbReference type="ChEBI" id="CHEBI:29105"/>
        <label>2</label>
    </ligand>
</feature>
<feature type="binding site" evidence="1">
    <location>
        <position position="186"/>
    </location>
    <ligand>
        <name>Zn(2+)</name>
        <dbReference type="ChEBI" id="CHEBI:29105"/>
        <label>2</label>
    </ligand>
</feature>
<feature type="binding site" evidence="1">
    <location>
        <position position="242"/>
    </location>
    <ligand>
        <name>Zn(2+)</name>
        <dbReference type="ChEBI" id="CHEBI:29105"/>
        <label>2</label>
    </ligand>
</feature>
<feature type="binding site" evidence="1">
    <location>
        <position position="315"/>
    </location>
    <ligand>
        <name>Zn(2+)</name>
        <dbReference type="ChEBI" id="CHEBI:29105"/>
        <label>1</label>
    </ligand>
</feature>
<feature type="modified residue" description="N6-carboxylysine" evidence="1">
    <location>
        <position position="146"/>
    </location>
</feature>
<protein>
    <recommendedName>
        <fullName evidence="1">Allantoinase</fullName>
        <ecNumber evidence="1">3.5.2.5</ecNumber>
    </recommendedName>
    <alternativeName>
        <fullName evidence="1">Allantoin-utilizing enzyme</fullName>
    </alternativeName>
</protein>
<dbReference type="EC" id="3.5.2.5" evidence="1"/>
<dbReference type="EMBL" id="AM933173">
    <property type="protein sequence ID" value="CAR36431.1"/>
    <property type="molecule type" value="Genomic_DNA"/>
</dbReference>
<dbReference type="RefSeq" id="WP_000006858.1">
    <property type="nucleotide sequence ID" value="NC_011274.1"/>
</dbReference>
<dbReference type="SMR" id="B5R646"/>
<dbReference type="KEGG" id="seg:SG0535"/>
<dbReference type="HOGENOM" id="CLU_015572_4_2_6"/>
<dbReference type="UniPathway" id="UPA00395">
    <property type="reaction ID" value="UER00653"/>
</dbReference>
<dbReference type="Proteomes" id="UP000008321">
    <property type="component" value="Chromosome"/>
</dbReference>
<dbReference type="GO" id="GO:0005737">
    <property type="term" value="C:cytoplasm"/>
    <property type="evidence" value="ECO:0007669"/>
    <property type="project" value="TreeGrafter"/>
</dbReference>
<dbReference type="GO" id="GO:0004038">
    <property type="term" value="F:allantoinase activity"/>
    <property type="evidence" value="ECO:0007669"/>
    <property type="project" value="UniProtKB-UniRule"/>
</dbReference>
<dbReference type="GO" id="GO:0050897">
    <property type="term" value="F:cobalt ion binding"/>
    <property type="evidence" value="ECO:0007669"/>
    <property type="project" value="InterPro"/>
</dbReference>
<dbReference type="GO" id="GO:0008270">
    <property type="term" value="F:zinc ion binding"/>
    <property type="evidence" value="ECO:0007669"/>
    <property type="project" value="InterPro"/>
</dbReference>
<dbReference type="GO" id="GO:0000256">
    <property type="term" value="P:allantoin catabolic process"/>
    <property type="evidence" value="ECO:0007669"/>
    <property type="project" value="UniProtKB-UniRule"/>
</dbReference>
<dbReference type="GO" id="GO:0006145">
    <property type="term" value="P:purine nucleobase catabolic process"/>
    <property type="evidence" value="ECO:0007669"/>
    <property type="project" value="TreeGrafter"/>
</dbReference>
<dbReference type="CDD" id="cd01315">
    <property type="entry name" value="L-HYD_ALN"/>
    <property type="match status" value="1"/>
</dbReference>
<dbReference type="FunFam" id="3.20.20.140:FF:000013">
    <property type="entry name" value="Allantoinase"/>
    <property type="match status" value="1"/>
</dbReference>
<dbReference type="Gene3D" id="3.20.20.140">
    <property type="entry name" value="Metal-dependent hydrolases"/>
    <property type="match status" value="1"/>
</dbReference>
<dbReference type="HAMAP" id="MF_01645">
    <property type="entry name" value="Hydantoinase"/>
    <property type="match status" value="1"/>
</dbReference>
<dbReference type="InterPro" id="IPR017593">
    <property type="entry name" value="Allantoinase"/>
</dbReference>
<dbReference type="InterPro" id="IPR047604">
    <property type="entry name" value="Allantoinase_bact"/>
</dbReference>
<dbReference type="InterPro" id="IPR006680">
    <property type="entry name" value="Amidohydro-rel"/>
</dbReference>
<dbReference type="InterPro" id="IPR050138">
    <property type="entry name" value="DHOase/Allantoinase_Hydrolase"/>
</dbReference>
<dbReference type="InterPro" id="IPR011059">
    <property type="entry name" value="Metal-dep_hydrolase_composite"/>
</dbReference>
<dbReference type="InterPro" id="IPR032466">
    <property type="entry name" value="Metal_Hydrolase"/>
</dbReference>
<dbReference type="NCBIfam" id="TIGR03178">
    <property type="entry name" value="allantoinase"/>
    <property type="match status" value="1"/>
</dbReference>
<dbReference type="NCBIfam" id="NF005960">
    <property type="entry name" value="PRK08044.1"/>
    <property type="match status" value="1"/>
</dbReference>
<dbReference type="PANTHER" id="PTHR43668">
    <property type="entry name" value="ALLANTOINASE"/>
    <property type="match status" value="1"/>
</dbReference>
<dbReference type="PANTHER" id="PTHR43668:SF4">
    <property type="entry name" value="ALLANTOINASE"/>
    <property type="match status" value="1"/>
</dbReference>
<dbReference type="Pfam" id="PF01979">
    <property type="entry name" value="Amidohydro_1"/>
    <property type="match status" value="1"/>
</dbReference>
<dbReference type="SUPFAM" id="SSF51338">
    <property type="entry name" value="Composite domain of metallo-dependent hydrolases"/>
    <property type="match status" value="1"/>
</dbReference>
<dbReference type="SUPFAM" id="SSF51556">
    <property type="entry name" value="Metallo-dependent hydrolases"/>
    <property type="match status" value="1"/>
</dbReference>
<name>ALLB_SALG2</name>
<reference key="1">
    <citation type="journal article" date="2008" name="Genome Res.">
        <title>Comparative genome analysis of Salmonella enteritidis PT4 and Salmonella gallinarum 287/91 provides insights into evolutionary and host adaptation pathways.</title>
        <authorList>
            <person name="Thomson N.R."/>
            <person name="Clayton D.J."/>
            <person name="Windhorst D."/>
            <person name="Vernikos G."/>
            <person name="Davidson S."/>
            <person name="Churcher C."/>
            <person name="Quail M.A."/>
            <person name="Stevens M."/>
            <person name="Jones M.A."/>
            <person name="Watson M."/>
            <person name="Barron A."/>
            <person name="Layton A."/>
            <person name="Pickard D."/>
            <person name="Kingsley R.A."/>
            <person name="Bignell A."/>
            <person name="Clark L."/>
            <person name="Harris B."/>
            <person name="Ormond D."/>
            <person name="Abdellah Z."/>
            <person name="Brooks K."/>
            <person name="Cherevach I."/>
            <person name="Chillingworth T."/>
            <person name="Woodward J."/>
            <person name="Norberczak H."/>
            <person name="Lord A."/>
            <person name="Arrowsmith C."/>
            <person name="Jagels K."/>
            <person name="Moule S."/>
            <person name="Mungall K."/>
            <person name="Saunders M."/>
            <person name="Whitehead S."/>
            <person name="Chabalgoity J.A."/>
            <person name="Maskell D."/>
            <person name="Humphreys T."/>
            <person name="Roberts M."/>
            <person name="Barrow P.A."/>
            <person name="Dougan G."/>
            <person name="Parkhill J."/>
        </authorList>
    </citation>
    <scope>NUCLEOTIDE SEQUENCE [LARGE SCALE GENOMIC DNA]</scope>
    <source>
        <strain>287/91 / NCTC 13346</strain>
    </source>
</reference>
<evidence type="ECO:0000255" key="1">
    <source>
        <dbReference type="HAMAP-Rule" id="MF_01645"/>
    </source>
</evidence>
<comment type="function">
    <text evidence="1">Catalyzes the conversion of allantoin (5-ureidohydantoin) to allantoic acid by hydrolytic cleavage of the five-member hydantoin ring.</text>
</comment>
<comment type="catalytic activity">
    <reaction evidence="1">
        <text>(S)-allantoin + H2O = allantoate + H(+)</text>
        <dbReference type="Rhea" id="RHEA:17029"/>
        <dbReference type="ChEBI" id="CHEBI:15377"/>
        <dbReference type="ChEBI" id="CHEBI:15378"/>
        <dbReference type="ChEBI" id="CHEBI:15678"/>
        <dbReference type="ChEBI" id="CHEBI:17536"/>
        <dbReference type="EC" id="3.5.2.5"/>
    </reaction>
</comment>
<comment type="cofactor">
    <cofactor evidence="1">
        <name>Zn(2+)</name>
        <dbReference type="ChEBI" id="CHEBI:29105"/>
    </cofactor>
    <text evidence="1">Binds 2 Zn(2+) ions per subunit.</text>
</comment>
<comment type="pathway">
    <text evidence="1">Nitrogen metabolism; (S)-allantoin degradation; allantoate from (S)-allantoin: step 1/1.</text>
</comment>
<comment type="subunit">
    <text evidence="1">Homotetramer.</text>
</comment>
<comment type="PTM">
    <text evidence="1">Carboxylation allows a single lysine to coordinate two zinc ions.</text>
</comment>
<comment type="similarity">
    <text evidence="1">Belongs to the metallo-dependent hydrolases superfamily. Allantoinase family.</text>
</comment>
<sequence>MSFDLIIKNGTVILENEARVIDIAAQGGKIAAIGENLGEAKNVLDATGLIVSPGMVDAHTHISEPGRTHWEGYETGTRAAAKGGITTMIEMPLNQLPATVDRETIELKFDAAKGKLTIDAAQLGGLVSYNLDRLHELDEVGVVGFKCFVATCGDRGIDNDFRDVNDWQFYKGAQKLGEMDQTVLVHCENALICDELGEEAKREGRVTAHDYVASRPVFTEVEAIRRVLYLAKAAGCRLHVCHISSPEGVEEVTRARQEVQDVTCESCPHYFVLDTDQFEEIGTLAKCSPPIRDQENQKGMWEKLFNGEIDCLVSDHSPCPPEMKAGNIMQAWGGIAGLQNCMDVMFDEAVQKRGMSLPMFGKLMATNAADIFGLKHKGRIAPGKDADLVFIQPDSSYVLKNEDLEYRHKVSPYVGRTIGARITKTILRGDVIYDIEHGFPVPPKGQFILKHQQ</sequence>
<gene>
    <name evidence="1" type="primary">allB</name>
    <name type="ordered locus">SG0535</name>
</gene>
<keyword id="KW-0378">Hydrolase</keyword>
<keyword id="KW-0479">Metal-binding</keyword>
<keyword id="KW-0659">Purine metabolism</keyword>
<keyword id="KW-0862">Zinc</keyword>
<accession>B5R646</accession>